<accession>Q54LC3</accession>
<proteinExistence type="inferred from homology"/>
<organism>
    <name type="scientific">Dictyostelium discoideum</name>
    <name type="common">Social amoeba</name>
    <dbReference type="NCBI Taxonomy" id="44689"/>
    <lineage>
        <taxon>Eukaryota</taxon>
        <taxon>Amoebozoa</taxon>
        <taxon>Evosea</taxon>
        <taxon>Eumycetozoa</taxon>
        <taxon>Dictyostelia</taxon>
        <taxon>Dictyosteliales</taxon>
        <taxon>Dictyosteliaceae</taxon>
        <taxon>Dictyostelium</taxon>
    </lineage>
</organism>
<sequence>MKFTKPLLLLIVAIIASSNAAETFSNFQVTNSDASSPCVTTPVELKVNTCQSACGSILNVLPVTGSTSKFTFNQFGAQDTKCAATPTSSNEFTCVDGKSKVAIGTTTYSVVCVPDKTNSSESDSSDSTRIGASFALFALALLSMLAL</sequence>
<feature type="signal peptide" evidence="1">
    <location>
        <begin position="1"/>
        <end position="20"/>
    </location>
</feature>
<feature type="chain" id="PRO_0000312136" description="Ponticulin-like protein C2">
    <location>
        <begin position="21"/>
        <end position="118"/>
    </location>
</feature>
<feature type="propeptide" id="PRO_0000312137" description="Removed in mature form" evidence="1">
    <location>
        <begin position="119"/>
        <end position="147"/>
    </location>
</feature>
<feature type="lipid moiety-binding region" description="GPI-like-anchor amidated asparagine" evidence="1">
    <location>
        <position position="118"/>
    </location>
</feature>
<feature type="glycosylation site" description="N-linked (GlcNAc...) asparagine" evidence="1">
    <location>
        <position position="118"/>
    </location>
</feature>
<comment type="subcellular location">
    <subcellularLocation>
        <location evidence="2">Cell membrane</location>
        <topology evidence="2">Lipid-anchor</topology>
        <topology evidence="2">GPI-anchor</topology>
    </subcellularLocation>
</comment>
<comment type="PTM">
    <text evidence="2">The GPI-like-anchor contains a phosphoceramide group, rather than a phosphatidyl group.</text>
</comment>
<comment type="similarity">
    <text evidence="2">Belongs to the ponticulin family.</text>
</comment>
<comment type="caution">
    <text evidence="2">The Dictyosteliida are known to produce a glycosylsphingolipidinositol anchor (GPI-like-anchor). It has not been established whether Dictyosteliida make a glycosylphosphatidylinositol anchor (GPI-anchor) also, and whether their GPI-like-anchor modifications can be interconverted with GPI-anchor modifications in a resculpting process. It has not been established that the GPI-like-anchor modification in Dictyosteliida utilizes the same sequence motif.</text>
</comment>
<comment type="caution">
    <text evidence="2">Different sequence motifs predict both the N-glycosylation modification and the GPI- or GPI-like anchor modification for Asn-118. While it is chemically possible for both modifications to occur, it is not known whether it is enzymatically possible.</text>
</comment>
<dbReference type="EMBL" id="AAFI02000089">
    <property type="protein sequence ID" value="EAL64113.1"/>
    <property type="molecule type" value="Genomic_DNA"/>
</dbReference>
<dbReference type="RefSeq" id="XP_637638.1">
    <property type="nucleotide sequence ID" value="XM_632546.1"/>
</dbReference>
<dbReference type="FunCoup" id="Q54LC3">
    <property type="interactions" value="698"/>
</dbReference>
<dbReference type="STRING" id="44689.Q54LC3"/>
<dbReference type="GlyCosmos" id="Q54LC3">
    <property type="glycosylation" value="1 site, No reported glycans"/>
</dbReference>
<dbReference type="GlyGen" id="Q54LC3">
    <property type="glycosylation" value="2 sites"/>
</dbReference>
<dbReference type="PaxDb" id="44689-DDB0232286"/>
<dbReference type="EnsemblProtists" id="EAL64113">
    <property type="protein sequence ID" value="EAL64113"/>
    <property type="gene ID" value="DDB_G0286715"/>
</dbReference>
<dbReference type="GeneID" id="8625779"/>
<dbReference type="KEGG" id="ddi:DDB_G0286715"/>
<dbReference type="dictyBase" id="DDB_G0286715">
    <property type="gene designation" value="ponC2"/>
</dbReference>
<dbReference type="VEuPathDB" id="AmoebaDB:DDB_G0286717"/>
<dbReference type="HOGENOM" id="CLU_1771535_0_0_1"/>
<dbReference type="InParanoid" id="Q54LC3"/>
<dbReference type="PhylomeDB" id="Q54LC3"/>
<dbReference type="PRO" id="PR:Q54LC3"/>
<dbReference type="Proteomes" id="UP000002195">
    <property type="component" value="Chromosome 4"/>
</dbReference>
<dbReference type="GO" id="GO:0042599">
    <property type="term" value="C:lamellar body"/>
    <property type="evidence" value="ECO:0007005"/>
    <property type="project" value="dictyBase"/>
</dbReference>
<dbReference type="GO" id="GO:0016020">
    <property type="term" value="C:membrane"/>
    <property type="evidence" value="ECO:0000250"/>
    <property type="project" value="dictyBase"/>
</dbReference>
<dbReference type="GO" id="GO:0005886">
    <property type="term" value="C:plasma membrane"/>
    <property type="evidence" value="ECO:0007669"/>
    <property type="project" value="UniProtKB-SubCell"/>
</dbReference>
<dbReference type="GO" id="GO:0098552">
    <property type="term" value="C:side of membrane"/>
    <property type="evidence" value="ECO:0007669"/>
    <property type="project" value="UniProtKB-KW"/>
</dbReference>
<dbReference type="GO" id="GO:0051015">
    <property type="term" value="F:actin filament binding"/>
    <property type="evidence" value="ECO:0000250"/>
    <property type="project" value="dictyBase"/>
</dbReference>
<reference key="1">
    <citation type="journal article" date="2005" name="Nature">
        <title>The genome of the social amoeba Dictyostelium discoideum.</title>
        <authorList>
            <person name="Eichinger L."/>
            <person name="Pachebat J.A."/>
            <person name="Gloeckner G."/>
            <person name="Rajandream M.A."/>
            <person name="Sucgang R."/>
            <person name="Berriman M."/>
            <person name="Song J."/>
            <person name="Olsen R."/>
            <person name="Szafranski K."/>
            <person name="Xu Q."/>
            <person name="Tunggal B."/>
            <person name="Kummerfeld S."/>
            <person name="Madera M."/>
            <person name="Konfortov B.A."/>
            <person name="Rivero F."/>
            <person name="Bankier A.T."/>
            <person name="Lehmann R."/>
            <person name="Hamlin N."/>
            <person name="Davies R."/>
            <person name="Gaudet P."/>
            <person name="Fey P."/>
            <person name="Pilcher K."/>
            <person name="Chen G."/>
            <person name="Saunders D."/>
            <person name="Sodergren E.J."/>
            <person name="Davis P."/>
            <person name="Kerhornou A."/>
            <person name="Nie X."/>
            <person name="Hall N."/>
            <person name="Anjard C."/>
            <person name="Hemphill L."/>
            <person name="Bason N."/>
            <person name="Farbrother P."/>
            <person name="Desany B."/>
            <person name="Just E."/>
            <person name="Morio T."/>
            <person name="Rost R."/>
            <person name="Churcher C.M."/>
            <person name="Cooper J."/>
            <person name="Haydock S."/>
            <person name="van Driessche N."/>
            <person name="Cronin A."/>
            <person name="Goodhead I."/>
            <person name="Muzny D.M."/>
            <person name="Mourier T."/>
            <person name="Pain A."/>
            <person name="Lu M."/>
            <person name="Harper D."/>
            <person name="Lindsay R."/>
            <person name="Hauser H."/>
            <person name="James K.D."/>
            <person name="Quiles M."/>
            <person name="Madan Babu M."/>
            <person name="Saito T."/>
            <person name="Buchrieser C."/>
            <person name="Wardroper A."/>
            <person name="Felder M."/>
            <person name="Thangavelu M."/>
            <person name="Johnson D."/>
            <person name="Knights A."/>
            <person name="Loulseged H."/>
            <person name="Mungall K.L."/>
            <person name="Oliver K."/>
            <person name="Price C."/>
            <person name="Quail M.A."/>
            <person name="Urushihara H."/>
            <person name="Hernandez J."/>
            <person name="Rabbinowitsch E."/>
            <person name="Steffen D."/>
            <person name="Sanders M."/>
            <person name="Ma J."/>
            <person name="Kohara Y."/>
            <person name="Sharp S."/>
            <person name="Simmonds M.N."/>
            <person name="Spiegler S."/>
            <person name="Tivey A."/>
            <person name="Sugano S."/>
            <person name="White B."/>
            <person name="Walker D."/>
            <person name="Woodward J.R."/>
            <person name="Winckler T."/>
            <person name="Tanaka Y."/>
            <person name="Shaulsky G."/>
            <person name="Schleicher M."/>
            <person name="Weinstock G.M."/>
            <person name="Rosenthal A."/>
            <person name="Cox E.C."/>
            <person name="Chisholm R.L."/>
            <person name="Gibbs R.A."/>
            <person name="Loomis W.F."/>
            <person name="Platzer M."/>
            <person name="Kay R.R."/>
            <person name="Williams J.G."/>
            <person name="Dear P.H."/>
            <person name="Noegel A.A."/>
            <person name="Barrell B.G."/>
            <person name="Kuspa A."/>
        </authorList>
    </citation>
    <scope>NUCLEOTIDE SEQUENCE [LARGE SCALE GENOMIC DNA]</scope>
    <source>
        <strain>AX4</strain>
    </source>
</reference>
<reference key="2">
    <citation type="journal article" date="2008" name="Langmuir">
        <title>Minimal F-actin cytoskeletal system for planar supported phospholipid bilayers.</title>
        <authorList>
            <person name="Barfoot R.J."/>
            <person name="Sheikh K.H."/>
            <person name="Johnson B.R."/>
            <person name="Colyer J."/>
            <person name="Miles R.E."/>
            <person name="Jeuken L.J."/>
            <person name="Bushby R.J."/>
            <person name="Evans S.D."/>
        </authorList>
    </citation>
    <scope>FUNCTION</scope>
</reference>
<protein>
    <recommendedName>
        <fullName>Ponticulin-like protein C2</fullName>
    </recommendedName>
</protein>
<gene>
    <name type="primary">ponC2</name>
    <name type="ORF">DDB_G0286715</name>
</gene>
<evidence type="ECO:0000255" key="1"/>
<evidence type="ECO:0000305" key="2"/>
<keyword id="KW-1003">Cell membrane</keyword>
<keyword id="KW-0325">Glycoprotein</keyword>
<keyword id="KW-0336">GPI-anchor</keyword>
<keyword id="KW-0449">Lipoprotein</keyword>
<keyword id="KW-0472">Membrane</keyword>
<keyword id="KW-1185">Reference proteome</keyword>
<keyword id="KW-0732">Signal</keyword>
<name>PONC2_DICDI</name>